<organism>
    <name type="scientific">Pseudomonas syringae pv. tomato (strain ATCC BAA-871 / DC3000)</name>
    <dbReference type="NCBI Taxonomy" id="223283"/>
    <lineage>
        <taxon>Bacteria</taxon>
        <taxon>Pseudomonadati</taxon>
        <taxon>Pseudomonadota</taxon>
        <taxon>Gammaproteobacteria</taxon>
        <taxon>Pseudomonadales</taxon>
        <taxon>Pseudomonadaceae</taxon>
        <taxon>Pseudomonas</taxon>
    </lineage>
</organism>
<proteinExistence type="inferred from homology"/>
<sequence>MSYTDIPAGNAIPDDFFTVIEIPANHSPIKYEVDKPSGQIFVDRFLSTPMFYPANYGFIPNTLSDDGDPLDVLVICPYPVSPGVVIRSRPVGVMYMTDEAGADAKVIAVPHEKLSSMYSNVKECSDLPALLLAQIQHFFENYKALEPGKWVKMGRWGSADEAREDIRKSVAAYNLKKEASK</sequence>
<evidence type="ECO:0000255" key="1">
    <source>
        <dbReference type="HAMAP-Rule" id="MF_00209"/>
    </source>
</evidence>
<name>IPYR2_PSESM</name>
<protein>
    <recommendedName>
        <fullName evidence="1">Inorganic pyrophosphatase 2</fullName>
        <ecNumber evidence="1">3.6.1.1</ecNumber>
    </recommendedName>
    <alternativeName>
        <fullName evidence="1">Pyrophosphate phospho-hydrolase 2</fullName>
        <shortName evidence="1">PPase 2</shortName>
    </alternativeName>
</protein>
<reference key="1">
    <citation type="journal article" date="2003" name="Proc. Natl. Acad. Sci. U.S.A.">
        <title>The complete genome sequence of the Arabidopsis and tomato pathogen Pseudomonas syringae pv. tomato DC3000.</title>
        <authorList>
            <person name="Buell C.R."/>
            <person name="Joardar V."/>
            <person name="Lindeberg M."/>
            <person name="Selengut J."/>
            <person name="Paulsen I.T."/>
            <person name="Gwinn M.L."/>
            <person name="Dodson R.J."/>
            <person name="DeBoy R.T."/>
            <person name="Durkin A.S."/>
            <person name="Kolonay J.F."/>
            <person name="Madupu R."/>
            <person name="Daugherty S.C."/>
            <person name="Brinkac L.M."/>
            <person name="Beanan M.J."/>
            <person name="Haft D.H."/>
            <person name="Nelson W.C."/>
            <person name="Davidsen T.M."/>
            <person name="Zafar N."/>
            <person name="Zhou L."/>
            <person name="Liu J."/>
            <person name="Yuan Q."/>
            <person name="Khouri H.M."/>
            <person name="Fedorova N.B."/>
            <person name="Tran B."/>
            <person name="Russell D."/>
            <person name="Berry K.J."/>
            <person name="Utterback T.R."/>
            <person name="Van Aken S.E."/>
            <person name="Feldblyum T.V."/>
            <person name="D'Ascenzo M."/>
            <person name="Deng W.-L."/>
            <person name="Ramos A.R."/>
            <person name="Alfano J.R."/>
            <person name="Cartinhour S."/>
            <person name="Chatterjee A.K."/>
            <person name="Delaney T.P."/>
            <person name="Lazarowitz S.G."/>
            <person name="Martin G.B."/>
            <person name="Schneider D.J."/>
            <person name="Tang X."/>
            <person name="Bender C.L."/>
            <person name="White O."/>
            <person name="Fraser C.M."/>
            <person name="Collmer A."/>
        </authorList>
    </citation>
    <scope>NUCLEOTIDE SEQUENCE [LARGE SCALE GENOMIC DNA]</scope>
    <source>
        <strain>ATCC BAA-871 / DC3000</strain>
    </source>
</reference>
<keyword id="KW-0963">Cytoplasm</keyword>
<keyword id="KW-0378">Hydrolase</keyword>
<keyword id="KW-0460">Magnesium</keyword>
<keyword id="KW-0479">Metal-binding</keyword>
<keyword id="KW-1185">Reference proteome</keyword>
<comment type="function">
    <text evidence="1">Catalyzes the hydrolysis of inorganic pyrophosphate (PPi) forming two phosphate ions.</text>
</comment>
<comment type="catalytic activity">
    <reaction evidence="1">
        <text>diphosphate + H2O = 2 phosphate + H(+)</text>
        <dbReference type="Rhea" id="RHEA:24576"/>
        <dbReference type="ChEBI" id="CHEBI:15377"/>
        <dbReference type="ChEBI" id="CHEBI:15378"/>
        <dbReference type="ChEBI" id="CHEBI:33019"/>
        <dbReference type="ChEBI" id="CHEBI:43474"/>
        <dbReference type="EC" id="3.6.1.1"/>
    </reaction>
</comment>
<comment type="cofactor">
    <cofactor evidence="1">
        <name>Mg(2+)</name>
        <dbReference type="ChEBI" id="CHEBI:18420"/>
    </cofactor>
</comment>
<comment type="subunit">
    <text evidence="1">Homohexamer.</text>
</comment>
<comment type="subcellular location">
    <subcellularLocation>
        <location evidence="1">Cytoplasm</location>
    </subcellularLocation>
</comment>
<comment type="similarity">
    <text evidence="1">Belongs to the PPase family.</text>
</comment>
<dbReference type="EC" id="3.6.1.1" evidence="1"/>
<dbReference type="EMBL" id="AE016853">
    <property type="protein sequence ID" value="AAO58061.1"/>
    <property type="molecule type" value="Genomic_DNA"/>
</dbReference>
<dbReference type="RefSeq" id="NP_794366.1">
    <property type="nucleotide sequence ID" value="NC_004578.1"/>
</dbReference>
<dbReference type="SMR" id="Q87WD6"/>
<dbReference type="STRING" id="223283.PSPTO_4615"/>
<dbReference type="KEGG" id="pst:PSPTO_4615"/>
<dbReference type="PATRIC" id="fig|223283.9.peg.4729"/>
<dbReference type="eggNOG" id="COG0221">
    <property type="taxonomic scope" value="Bacteria"/>
</dbReference>
<dbReference type="HOGENOM" id="CLU_073198_1_0_6"/>
<dbReference type="OrthoDB" id="5187599at2"/>
<dbReference type="PhylomeDB" id="Q87WD6"/>
<dbReference type="Proteomes" id="UP000002515">
    <property type="component" value="Chromosome"/>
</dbReference>
<dbReference type="GO" id="GO:0005737">
    <property type="term" value="C:cytoplasm"/>
    <property type="evidence" value="ECO:0007669"/>
    <property type="project" value="UniProtKB-SubCell"/>
</dbReference>
<dbReference type="GO" id="GO:0004427">
    <property type="term" value="F:inorganic diphosphate phosphatase activity"/>
    <property type="evidence" value="ECO:0007669"/>
    <property type="project" value="UniProtKB-UniRule"/>
</dbReference>
<dbReference type="GO" id="GO:0000287">
    <property type="term" value="F:magnesium ion binding"/>
    <property type="evidence" value="ECO:0007669"/>
    <property type="project" value="UniProtKB-UniRule"/>
</dbReference>
<dbReference type="GO" id="GO:0006796">
    <property type="term" value="P:phosphate-containing compound metabolic process"/>
    <property type="evidence" value="ECO:0007669"/>
    <property type="project" value="InterPro"/>
</dbReference>
<dbReference type="CDD" id="cd00412">
    <property type="entry name" value="pyrophosphatase"/>
    <property type="match status" value="1"/>
</dbReference>
<dbReference type="FunFam" id="3.90.80.10:FF:000001">
    <property type="entry name" value="Inorganic pyrophosphatase"/>
    <property type="match status" value="1"/>
</dbReference>
<dbReference type="Gene3D" id="3.90.80.10">
    <property type="entry name" value="Inorganic pyrophosphatase"/>
    <property type="match status" value="1"/>
</dbReference>
<dbReference type="HAMAP" id="MF_00209">
    <property type="entry name" value="Inorganic_PPase"/>
    <property type="match status" value="1"/>
</dbReference>
<dbReference type="InterPro" id="IPR008162">
    <property type="entry name" value="Pyrophosphatase"/>
</dbReference>
<dbReference type="InterPro" id="IPR036649">
    <property type="entry name" value="Pyrophosphatase_sf"/>
</dbReference>
<dbReference type="NCBIfam" id="NF002317">
    <property type="entry name" value="PRK01250.1"/>
    <property type="match status" value="1"/>
</dbReference>
<dbReference type="PANTHER" id="PTHR10286">
    <property type="entry name" value="INORGANIC PYROPHOSPHATASE"/>
    <property type="match status" value="1"/>
</dbReference>
<dbReference type="Pfam" id="PF00719">
    <property type="entry name" value="Pyrophosphatase"/>
    <property type="match status" value="1"/>
</dbReference>
<dbReference type="SUPFAM" id="SSF50324">
    <property type="entry name" value="Inorganic pyrophosphatase"/>
    <property type="match status" value="1"/>
</dbReference>
<dbReference type="PROSITE" id="PS00387">
    <property type="entry name" value="PPASE"/>
    <property type="match status" value="1"/>
</dbReference>
<accession>Q87WD6</accession>
<gene>
    <name evidence="1" type="primary">ppa2</name>
    <name type="ordered locus">PSPTO_4615</name>
</gene>
<feature type="chain" id="PRO_0000137522" description="Inorganic pyrophosphatase 2">
    <location>
        <begin position="1"/>
        <end position="181"/>
    </location>
</feature>
<feature type="binding site" evidence="1">
    <location>
        <position position="30"/>
    </location>
    <ligand>
        <name>substrate</name>
    </ligand>
</feature>
<feature type="binding site" evidence="1">
    <location>
        <position position="44"/>
    </location>
    <ligand>
        <name>substrate</name>
    </ligand>
</feature>
<feature type="binding site" evidence="1">
    <location>
        <position position="56"/>
    </location>
    <ligand>
        <name>substrate</name>
    </ligand>
</feature>
<feature type="binding site" evidence="1">
    <location>
        <position position="66"/>
    </location>
    <ligand>
        <name>Mg(2+)</name>
        <dbReference type="ChEBI" id="CHEBI:18420"/>
        <label>1</label>
    </ligand>
</feature>
<feature type="binding site" evidence="1">
    <location>
        <position position="71"/>
    </location>
    <ligand>
        <name>Mg(2+)</name>
        <dbReference type="ChEBI" id="CHEBI:18420"/>
        <label>1</label>
    </ligand>
</feature>
<feature type="binding site" evidence="1">
    <location>
        <position position="71"/>
    </location>
    <ligand>
        <name>Mg(2+)</name>
        <dbReference type="ChEBI" id="CHEBI:18420"/>
        <label>2</label>
    </ligand>
</feature>
<feature type="binding site" evidence="1">
    <location>
        <position position="103"/>
    </location>
    <ligand>
        <name>Mg(2+)</name>
        <dbReference type="ChEBI" id="CHEBI:18420"/>
        <label>1</label>
    </ligand>
</feature>
<feature type="binding site" evidence="1">
    <location>
        <position position="142"/>
    </location>
    <ligand>
        <name>substrate</name>
    </ligand>
</feature>